<evidence type="ECO:0000255" key="1">
    <source>
        <dbReference type="HAMAP-Rule" id="MF_01693"/>
    </source>
</evidence>
<feature type="chain" id="PRO_0000381089" description="8-amino-7-oxononanoate synthase">
    <location>
        <begin position="1"/>
        <end position="415"/>
    </location>
</feature>
<feature type="binding site" evidence="1">
    <location>
        <position position="21"/>
    </location>
    <ligand>
        <name>substrate</name>
    </ligand>
</feature>
<feature type="binding site" evidence="1">
    <location>
        <begin position="117"/>
        <end position="118"/>
    </location>
    <ligand>
        <name>pyridoxal 5'-phosphate</name>
        <dbReference type="ChEBI" id="CHEBI:597326"/>
    </ligand>
</feature>
<feature type="binding site" evidence="1">
    <location>
        <position position="149"/>
    </location>
    <ligand>
        <name>substrate</name>
    </ligand>
</feature>
<feature type="binding site" evidence="1">
    <location>
        <position position="195"/>
    </location>
    <ligand>
        <name>pyridoxal 5'-phosphate</name>
        <dbReference type="ChEBI" id="CHEBI:597326"/>
    </ligand>
</feature>
<feature type="binding site" evidence="1">
    <location>
        <position position="223"/>
    </location>
    <ligand>
        <name>pyridoxal 5'-phosphate</name>
        <dbReference type="ChEBI" id="CHEBI:597326"/>
    </ligand>
</feature>
<feature type="binding site" evidence="1">
    <location>
        <position position="251"/>
    </location>
    <ligand>
        <name>pyridoxal 5'-phosphate</name>
        <dbReference type="ChEBI" id="CHEBI:597326"/>
    </ligand>
</feature>
<feature type="binding site" evidence="1">
    <location>
        <position position="374"/>
    </location>
    <ligand>
        <name>substrate</name>
    </ligand>
</feature>
<feature type="modified residue" description="N6-(pyridoxal phosphate)lysine" evidence="1">
    <location>
        <position position="254"/>
    </location>
</feature>
<organism>
    <name type="scientific">Ralstonia pickettii (strain 12J)</name>
    <dbReference type="NCBI Taxonomy" id="402626"/>
    <lineage>
        <taxon>Bacteria</taxon>
        <taxon>Pseudomonadati</taxon>
        <taxon>Pseudomonadota</taxon>
        <taxon>Betaproteobacteria</taxon>
        <taxon>Burkholderiales</taxon>
        <taxon>Burkholderiaceae</taxon>
        <taxon>Ralstonia</taxon>
    </lineage>
</organism>
<comment type="function">
    <text evidence="1">Catalyzes the decarboxylative condensation of pimeloyl-[acyl-carrier protein] and L-alanine to produce 8-amino-7-oxononanoate (AON), [acyl-carrier protein], and carbon dioxide.</text>
</comment>
<comment type="catalytic activity">
    <reaction evidence="1">
        <text>6-carboxyhexanoyl-[ACP] + L-alanine + H(+) = (8S)-8-amino-7-oxononanoate + holo-[ACP] + CO2</text>
        <dbReference type="Rhea" id="RHEA:42288"/>
        <dbReference type="Rhea" id="RHEA-COMP:9685"/>
        <dbReference type="Rhea" id="RHEA-COMP:9955"/>
        <dbReference type="ChEBI" id="CHEBI:15378"/>
        <dbReference type="ChEBI" id="CHEBI:16526"/>
        <dbReference type="ChEBI" id="CHEBI:57972"/>
        <dbReference type="ChEBI" id="CHEBI:64479"/>
        <dbReference type="ChEBI" id="CHEBI:78846"/>
        <dbReference type="ChEBI" id="CHEBI:149468"/>
        <dbReference type="EC" id="2.3.1.47"/>
    </reaction>
</comment>
<comment type="cofactor">
    <cofactor evidence="1">
        <name>pyridoxal 5'-phosphate</name>
        <dbReference type="ChEBI" id="CHEBI:597326"/>
    </cofactor>
</comment>
<comment type="pathway">
    <text evidence="1">Cofactor biosynthesis; biotin biosynthesis.</text>
</comment>
<comment type="subunit">
    <text evidence="1">Homodimer.</text>
</comment>
<comment type="similarity">
    <text evidence="1">Belongs to the class-II pyridoxal-phosphate-dependent aminotransferase family. BioF subfamily.</text>
</comment>
<gene>
    <name evidence="1" type="primary">bioF</name>
    <name type="ordered locus">Rpic_1372</name>
</gene>
<reference key="1">
    <citation type="submission" date="2008-05" db="EMBL/GenBank/DDBJ databases">
        <title>Complete sequence of chromosome 1 of Ralstonia pickettii 12J.</title>
        <authorList>
            <person name="Lucas S."/>
            <person name="Copeland A."/>
            <person name="Lapidus A."/>
            <person name="Glavina del Rio T."/>
            <person name="Dalin E."/>
            <person name="Tice H."/>
            <person name="Bruce D."/>
            <person name="Goodwin L."/>
            <person name="Pitluck S."/>
            <person name="Meincke L."/>
            <person name="Brettin T."/>
            <person name="Detter J.C."/>
            <person name="Han C."/>
            <person name="Kuske C.R."/>
            <person name="Schmutz J."/>
            <person name="Larimer F."/>
            <person name="Land M."/>
            <person name="Hauser L."/>
            <person name="Kyrpides N."/>
            <person name="Mikhailova N."/>
            <person name="Marsh T."/>
            <person name="Richardson P."/>
        </authorList>
    </citation>
    <scope>NUCLEOTIDE SEQUENCE [LARGE SCALE GENOMIC DNA]</scope>
    <source>
        <strain>12J</strain>
    </source>
</reference>
<protein>
    <recommendedName>
        <fullName evidence="1">8-amino-7-oxononanoate synthase</fullName>
        <shortName evidence="1">AONS</shortName>
        <ecNumber evidence="1">2.3.1.47</ecNumber>
    </recommendedName>
    <alternativeName>
        <fullName evidence="1">7-keto-8-amino-pelargonic acid synthase</fullName>
        <shortName evidence="1">7-KAP synthase</shortName>
        <shortName evidence="1">KAPA synthase</shortName>
    </alternativeName>
    <alternativeName>
        <fullName evidence="1">8-amino-7-ketopelargonate synthase</fullName>
    </alternativeName>
</protein>
<name>BIOF_RALPJ</name>
<sequence length="415" mass="43789">MRLLDDLQAGLAAIDAAHLRRVRRTAYSPTDRSQRISVPGEAPRDILGFCGNDYLGLAAHPALVEAMTQGTQQYGFGSGASHLVSGHSIAHARLEARMAALQGEHIPEADALFFCTGYMANLAVVSAMAQAGGIRPAEECTIFSDALNHASLIDGARLSRAPIKVYPHVDLAALEALLAASTSRNKLIVTDGVFSMDGDIAPLPELLALAERYDAWLIVDDAHGLGVLGENGAGVLSHFGLHSQRIIYVGTFGKAAGGSGAAIVGHRLVIDWLVQRARTYIFTTATPPGIACAVEAALDLIASEEGDERRARLDRHIAVWSAHAQRLAARFGWQWMPSPTAIQPIVIGENAPALALAAALEHEGIRIAAIRPPTVPAGTARLRITLSAAHTDADIERLAQALEAAGQSLQPAKAA</sequence>
<accession>B2UBJ3</accession>
<proteinExistence type="inferred from homology"/>
<dbReference type="EC" id="2.3.1.47" evidence="1"/>
<dbReference type="EMBL" id="CP001068">
    <property type="protein sequence ID" value="ACD26514.1"/>
    <property type="molecule type" value="Genomic_DNA"/>
</dbReference>
<dbReference type="SMR" id="B2UBJ3"/>
<dbReference type="STRING" id="402626.Rpic_1372"/>
<dbReference type="KEGG" id="rpi:Rpic_1372"/>
<dbReference type="PATRIC" id="fig|402626.5.peg.2580"/>
<dbReference type="eggNOG" id="COG0156">
    <property type="taxonomic scope" value="Bacteria"/>
</dbReference>
<dbReference type="HOGENOM" id="CLU_015846_11_2_4"/>
<dbReference type="UniPathway" id="UPA00078"/>
<dbReference type="GO" id="GO:0008710">
    <property type="term" value="F:8-amino-7-oxononanoate synthase activity"/>
    <property type="evidence" value="ECO:0007669"/>
    <property type="project" value="UniProtKB-UniRule"/>
</dbReference>
<dbReference type="GO" id="GO:0030170">
    <property type="term" value="F:pyridoxal phosphate binding"/>
    <property type="evidence" value="ECO:0007669"/>
    <property type="project" value="UniProtKB-UniRule"/>
</dbReference>
<dbReference type="GO" id="GO:0009102">
    <property type="term" value="P:biotin biosynthetic process"/>
    <property type="evidence" value="ECO:0007669"/>
    <property type="project" value="UniProtKB-UniRule"/>
</dbReference>
<dbReference type="Gene3D" id="3.90.1150.10">
    <property type="entry name" value="Aspartate Aminotransferase, domain 1"/>
    <property type="match status" value="1"/>
</dbReference>
<dbReference type="Gene3D" id="3.40.640.10">
    <property type="entry name" value="Type I PLP-dependent aspartate aminotransferase-like (Major domain)"/>
    <property type="match status" value="1"/>
</dbReference>
<dbReference type="HAMAP" id="MF_01693">
    <property type="entry name" value="BioF_aminotrans_2"/>
    <property type="match status" value="1"/>
</dbReference>
<dbReference type="InterPro" id="IPR004839">
    <property type="entry name" value="Aminotransferase_I/II_large"/>
</dbReference>
<dbReference type="InterPro" id="IPR050087">
    <property type="entry name" value="AON_synthase_class-II"/>
</dbReference>
<dbReference type="InterPro" id="IPR004723">
    <property type="entry name" value="AONS_Archaea/Proteobacteria"/>
</dbReference>
<dbReference type="InterPro" id="IPR022834">
    <property type="entry name" value="AONS_Proteobacteria"/>
</dbReference>
<dbReference type="InterPro" id="IPR015424">
    <property type="entry name" value="PyrdxlP-dep_Trfase"/>
</dbReference>
<dbReference type="InterPro" id="IPR015421">
    <property type="entry name" value="PyrdxlP-dep_Trfase_major"/>
</dbReference>
<dbReference type="InterPro" id="IPR015422">
    <property type="entry name" value="PyrdxlP-dep_Trfase_small"/>
</dbReference>
<dbReference type="NCBIfam" id="TIGR00858">
    <property type="entry name" value="bioF"/>
    <property type="match status" value="1"/>
</dbReference>
<dbReference type="PANTHER" id="PTHR13693:SF100">
    <property type="entry name" value="8-AMINO-7-OXONONANOATE SYNTHASE"/>
    <property type="match status" value="1"/>
</dbReference>
<dbReference type="PANTHER" id="PTHR13693">
    <property type="entry name" value="CLASS II AMINOTRANSFERASE/8-AMINO-7-OXONONANOATE SYNTHASE"/>
    <property type="match status" value="1"/>
</dbReference>
<dbReference type="Pfam" id="PF00155">
    <property type="entry name" value="Aminotran_1_2"/>
    <property type="match status" value="1"/>
</dbReference>
<dbReference type="SUPFAM" id="SSF53383">
    <property type="entry name" value="PLP-dependent transferases"/>
    <property type="match status" value="1"/>
</dbReference>
<keyword id="KW-0093">Biotin biosynthesis</keyword>
<keyword id="KW-0663">Pyridoxal phosphate</keyword>
<keyword id="KW-0808">Transferase</keyword>